<protein>
    <recommendedName>
        <fullName evidence="7">Biofilm-surface layer protein A</fullName>
    </recommendedName>
    <alternativeName>
        <fullName>ORF-1</fullName>
    </alternativeName>
</protein>
<reference key="1">
    <citation type="journal article" date="1997" name="Nature">
        <title>The complete genome sequence of the Gram-positive bacterium Bacillus subtilis.</title>
        <authorList>
            <person name="Kunst F."/>
            <person name="Ogasawara N."/>
            <person name="Moszer I."/>
            <person name="Albertini A.M."/>
            <person name="Alloni G."/>
            <person name="Azevedo V."/>
            <person name="Bertero M.G."/>
            <person name="Bessieres P."/>
            <person name="Bolotin A."/>
            <person name="Borchert S."/>
            <person name="Borriss R."/>
            <person name="Boursier L."/>
            <person name="Brans A."/>
            <person name="Braun M."/>
            <person name="Brignell S.C."/>
            <person name="Bron S."/>
            <person name="Brouillet S."/>
            <person name="Bruschi C.V."/>
            <person name="Caldwell B."/>
            <person name="Capuano V."/>
            <person name="Carter N.M."/>
            <person name="Choi S.-K."/>
            <person name="Codani J.-J."/>
            <person name="Connerton I.F."/>
            <person name="Cummings N.J."/>
            <person name="Daniel R.A."/>
            <person name="Denizot F."/>
            <person name="Devine K.M."/>
            <person name="Duesterhoeft A."/>
            <person name="Ehrlich S.D."/>
            <person name="Emmerson P.T."/>
            <person name="Entian K.-D."/>
            <person name="Errington J."/>
            <person name="Fabret C."/>
            <person name="Ferrari E."/>
            <person name="Foulger D."/>
            <person name="Fritz C."/>
            <person name="Fujita M."/>
            <person name="Fujita Y."/>
            <person name="Fuma S."/>
            <person name="Galizzi A."/>
            <person name="Galleron N."/>
            <person name="Ghim S.-Y."/>
            <person name="Glaser P."/>
            <person name="Goffeau A."/>
            <person name="Golightly E.J."/>
            <person name="Grandi G."/>
            <person name="Guiseppi G."/>
            <person name="Guy B.J."/>
            <person name="Haga K."/>
            <person name="Haiech J."/>
            <person name="Harwood C.R."/>
            <person name="Henaut A."/>
            <person name="Hilbert H."/>
            <person name="Holsappel S."/>
            <person name="Hosono S."/>
            <person name="Hullo M.-F."/>
            <person name="Itaya M."/>
            <person name="Jones L.-M."/>
            <person name="Joris B."/>
            <person name="Karamata D."/>
            <person name="Kasahara Y."/>
            <person name="Klaerr-Blanchard M."/>
            <person name="Klein C."/>
            <person name="Kobayashi Y."/>
            <person name="Koetter P."/>
            <person name="Koningstein G."/>
            <person name="Krogh S."/>
            <person name="Kumano M."/>
            <person name="Kurita K."/>
            <person name="Lapidus A."/>
            <person name="Lardinois S."/>
            <person name="Lauber J."/>
            <person name="Lazarevic V."/>
            <person name="Lee S.-M."/>
            <person name="Levine A."/>
            <person name="Liu H."/>
            <person name="Masuda S."/>
            <person name="Mauel C."/>
            <person name="Medigue C."/>
            <person name="Medina N."/>
            <person name="Mellado R.P."/>
            <person name="Mizuno M."/>
            <person name="Moestl D."/>
            <person name="Nakai S."/>
            <person name="Noback M."/>
            <person name="Noone D."/>
            <person name="O'Reilly M."/>
            <person name="Ogawa K."/>
            <person name="Ogiwara A."/>
            <person name="Oudega B."/>
            <person name="Park S.-H."/>
            <person name="Parro V."/>
            <person name="Pohl T.M."/>
            <person name="Portetelle D."/>
            <person name="Porwollik S."/>
            <person name="Prescott A.M."/>
            <person name="Presecan E."/>
            <person name="Pujic P."/>
            <person name="Purnelle B."/>
            <person name="Rapoport G."/>
            <person name="Rey M."/>
            <person name="Reynolds S."/>
            <person name="Rieger M."/>
            <person name="Rivolta C."/>
            <person name="Rocha E."/>
            <person name="Roche B."/>
            <person name="Rose M."/>
            <person name="Sadaie Y."/>
            <person name="Sato T."/>
            <person name="Scanlan E."/>
            <person name="Schleich S."/>
            <person name="Schroeter R."/>
            <person name="Scoffone F."/>
            <person name="Sekiguchi J."/>
            <person name="Sekowska A."/>
            <person name="Seror S.J."/>
            <person name="Serror P."/>
            <person name="Shin B.-S."/>
            <person name="Soldo B."/>
            <person name="Sorokin A."/>
            <person name="Tacconi E."/>
            <person name="Takagi T."/>
            <person name="Takahashi H."/>
            <person name="Takemaru K."/>
            <person name="Takeuchi M."/>
            <person name="Tamakoshi A."/>
            <person name="Tanaka T."/>
            <person name="Terpstra P."/>
            <person name="Tognoni A."/>
            <person name="Tosato V."/>
            <person name="Uchiyama S."/>
            <person name="Vandenbol M."/>
            <person name="Vannier F."/>
            <person name="Vassarotti A."/>
            <person name="Viari A."/>
            <person name="Wambutt R."/>
            <person name="Wedler E."/>
            <person name="Wedler H."/>
            <person name="Weitzenegger T."/>
            <person name="Winters P."/>
            <person name="Wipat A."/>
            <person name="Yamamoto H."/>
            <person name="Yamane K."/>
            <person name="Yasumoto K."/>
            <person name="Yata K."/>
            <person name="Yoshida K."/>
            <person name="Yoshikawa H.-F."/>
            <person name="Zumstein E."/>
            <person name="Yoshikawa H."/>
            <person name="Danchin A."/>
        </authorList>
    </citation>
    <scope>NUCLEOTIDE SEQUENCE [LARGE SCALE GENOMIC DNA]</scope>
    <source>
        <strain>168</strain>
    </source>
</reference>
<reference key="2">
    <citation type="journal article" date="1996" name="J. Bacteriol.">
        <title>Synthesis of the osmoprotectant glycine betaine in Bacillus subtilis: characterization of the gbsAB genes.</title>
        <authorList>
            <person name="Boch J."/>
            <person name="Kempf B."/>
            <person name="Schmid R."/>
            <person name="Bremer E."/>
        </authorList>
    </citation>
    <scope>NUCLEOTIDE SEQUENCE [GENOMIC DNA] OF 1-108</scope>
    <source>
        <strain>168 / JH642</strain>
    </source>
</reference>
<reference key="3">
    <citation type="journal article" date="2009" name="J. Bacteriol.">
        <title>DegU and Spo0A jointly control transcription of two loci required for complex colony development by Bacillus subtilis.</title>
        <authorList>
            <person name="Verhamme D.T."/>
            <person name="Murray E.J."/>
            <person name="Stanley-Wall N.R."/>
        </authorList>
    </citation>
    <scope>FUNCTION</scope>
    <scope>TRANSCRIPTION REGULATION</scope>
    <scope>DISRUPTION PHENOTYPE</scope>
</reference>
<reference key="4">
    <citation type="journal article" date="2011" name="J. Bacteriol.">
        <title>YuaB functions synergistically with the exopolysaccharide and TasA amyloid fibers to allow biofilm formation by Bacillus subtilis.</title>
        <authorList>
            <person name="Ostrowski A."/>
            <person name="Mehert A."/>
            <person name="Prescott A."/>
            <person name="Kiley T.B."/>
            <person name="Stanley-Wall N.R."/>
        </authorList>
    </citation>
    <scope>FUNCTION</scope>
    <scope>SUBCELLULAR LOCATION</scope>
</reference>
<reference key="5">
    <citation type="journal article" date="2012" name="Mol. Microbiol.">
        <title>BslA(YuaB) forms a hydrophobic layer on the surface of Bacillus subtilis biofilms.</title>
        <authorList>
            <person name="Kobayashi K."/>
            <person name="Iwano M."/>
        </authorList>
    </citation>
    <scope>FUNCTION</scope>
    <scope>SUBUNIT</scope>
    <scope>SUBCELLULAR LOCATION</scope>
    <scope>DISRUPTION PHENOTYPE</scope>
</reference>
<reference key="6">
    <citation type="journal article" date="2017" name="Langmuir">
        <title>Characterization of surface-active biofilm protein BslA in self-assembling Langmuir monolayer at the air-water interface.</title>
        <authorList>
            <person name="Liu W."/>
            <person name="Li S."/>
            <person name="Wang Z."/>
            <person name="Yan E.C.Y."/>
            <person name="Leblanc R.M."/>
        </authorList>
    </citation>
    <scope>FUNCTION</scope>
</reference>
<reference evidence="9" key="7">
    <citation type="journal article" date="2013" name="Proc. Natl. Acad. Sci. U.S.A.">
        <title>BslA is a self-assembling bacterial hydrophobin that coats the Bacillus subtilis biofilm.</title>
        <authorList>
            <person name="Hobley L."/>
            <person name="Ostrowski A."/>
            <person name="Rao F.V."/>
            <person name="Bromley K.M."/>
            <person name="Porter M."/>
            <person name="Prescott A.R."/>
            <person name="MacPhee C.E."/>
            <person name="van Aalten D.M."/>
            <person name="Stanley-Wall N.R."/>
        </authorList>
    </citation>
    <scope>X-RAY CRYSTALLOGRAPHY (1.91 ANGSTROMS) OF 48-172</scope>
    <scope>FUNCTION</scope>
    <scope>SUBUNIT</scope>
    <scope>SUBCELLULAR LOCATION</scope>
    <scope>MUTAGENESIS OF LEU-76; LEU-77 AND LEU-79</scope>
</reference>
<reference key="8">
    <citation type="journal article" date="2015" name="Proc. Natl. Acad. Sci. U.S.A.">
        <title>Correction for Hobley et al., BslA is a self-assembling bacterial hydrophobin that coats the Bacillus subtilis biofilm.</title>
        <authorList>
            <person name="Hobley L."/>
            <person name="Ostrowski A."/>
            <person name="Rao F.V."/>
            <person name="Bromley K.M."/>
            <person name="Porter M."/>
            <person name="Prescott A.R."/>
            <person name="MacPhee C.E."/>
            <person name="van Aalten D.M."/>
            <person name="Stanley-Wall N.R."/>
        </authorList>
    </citation>
    <scope>ERRATUM OF PUBMED:23904481</scope>
</reference>
<evidence type="ECO:0000255" key="1"/>
<evidence type="ECO:0000269" key="2">
    <source>
    </source>
</evidence>
<evidence type="ECO:0000269" key="3">
    <source>
    </source>
</evidence>
<evidence type="ECO:0000269" key="4">
    <source>
    </source>
</evidence>
<evidence type="ECO:0000269" key="5">
    <source>
    </source>
</evidence>
<evidence type="ECO:0000269" key="6">
    <source>
    </source>
</evidence>
<evidence type="ECO:0000303" key="7">
    <source>
    </source>
</evidence>
<evidence type="ECO:0000305" key="8"/>
<evidence type="ECO:0007744" key="9">
    <source>
        <dbReference type="PDB" id="4BHU"/>
    </source>
</evidence>
<evidence type="ECO:0007829" key="10">
    <source>
        <dbReference type="PDB" id="4BHU"/>
    </source>
</evidence>
<organism>
    <name type="scientific">Bacillus subtilis (strain 168)</name>
    <dbReference type="NCBI Taxonomy" id="224308"/>
    <lineage>
        <taxon>Bacteria</taxon>
        <taxon>Bacillati</taxon>
        <taxon>Bacillota</taxon>
        <taxon>Bacilli</taxon>
        <taxon>Bacillales</taxon>
        <taxon>Bacillaceae</taxon>
        <taxon>Bacillus</taxon>
    </lineage>
</organism>
<feature type="signal peptide" evidence="1">
    <location>
        <begin position="1"/>
        <end position="28"/>
    </location>
</feature>
<feature type="chain" id="PRO_0000049911" description="Biofilm-surface layer protein A" evidence="1">
    <location>
        <begin position="29"/>
        <end position="181"/>
    </location>
</feature>
<feature type="mutagenesis site" description="Partial loss of morphological complexity. Biofilm retains nonwetting, hydrophobic nature." evidence="5">
    <original>L</original>
    <variation>D</variation>
    <location>
        <position position="76"/>
    </location>
</feature>
<feature type="mutagenesis site" description="Forms flat, unwrinkled biofilm. Biofilm retains nonwetting, hydrophobic nature." evidence="5">
    <original>L</original>
    <variation>K</variation>
    <location>
        <position position="76"/>
    </location>
</feature>
<feature type="mutagenesis site" description="Forms flat, unwrinkled biofilm. Loss of colony hydrophobicity." evidence="5">
    <original>L</original>
    <variation>D</variation>
    <variation>K</variation>
    <location>
        <position position="77"/>
    </location>
</feature>
<feature type="mutagenesis site" description="Forms flat, unwrinkled biofilm. Loss of colony hydrophobicity." evidence="5">
    <original>L</original>
    <variation>D</variation>
    <variation>K</variation>
    <location>
        <position position="79"/>
    </location>
</feature>
<feature type="strand" evidence="10">
    <location>
        <begin position="49"/>
        <end position="54"/>
    </location>
</feature>
<feature type="strand" evidence="10">
    <location>
        <begin position="63"/>
        <end position="72"/>
    </location>
</feature>
<feature type="strand" evidence="10">
    <location>
        <begin position="76"/>
        <end position="85"/>
    </location>
</feature>
<feature type="strand" evidence="10">
    <location>
        <begin position="96"/>
        <end position="98"/>
    </location>
</feature>
<feature type="helix" evidence="10">
    <location>
        <begin position="105"/>
        <end position="107"/>
    </location>
</feature>
<feature type="turn" evidence="10">
    <location>
        <begin position="110"/>
        <end position="113"/>
    </location>
</feature>
<feature type="strand" evidence="10">
    <location>
        <begin position="114"/>
        <end position="123"/>
    </location>
</feature>
<feature type="strand" evidence="10">
    <location>
        <begin position="131"/>
        <end position="137"/>
    </location>
</feature>
<feature type="strand" evidence="10">
    <location>
        <begin position="140"/>
        <end position="150"/>
    </location>
</feature>
<feature type="strand" evidence="10">
    <location>
        <begin position="152"/>
        <end position="156"/>
    </location>
</feature>
<feature type="strand" evidence="10">
    <location>
        <begin position="160"/>
        <end position="168"/>
    </location>
</feature>
<comment type="function">
    <text evidence="2 3 4 5 6">Involved in biofilm formation (PubMed:18978066, PubMed:21742882). Self-polymerizes and forms a layer on the surface of biofilms that confers hydrophobicity to the biofilm (PubMed:22571672, PubMed:23904481). The layer is stable and capable of resistance to high mechanical force compression (PubMed:28701036). Required for complex colony architecture (PubMed:18978066). May function synergistically with exopolysaccharides and TasA amyloid fibers to facilitate the assembly of the biofilm matrix (PubMed:21742882).</text>
</comment>
<comment type="subunit">
    <text evidence="4 5">Forms polymers.</text>
</comment>
<comment type="subcellular location">
    <subcellularLocation>
        <location evidence="4 5">Secreted</location>
    </subcellularLocation>
    <subcellularLocation>
        <location evidence="3">Secreted</location>
        <location evidence="3">Cell wall</location>
    </subcellularLocation>
    <text evidence="4 5">Localizes to the biofilm matrix (PubMed:22571672, PubMed:23904481). Forms a distinct layer at biofilm surfaces (PubMed:23904481). Localization to the matrix is exopolysaccharide-dependent (PubMed:22571672).</text>
</comment>
<comment type="induction">
    <text evidence="2">Up-regulated by DegU and Spo0A. Repressed by AbrB.</text>
</comment>
<comment type="disruption phenotype">
    <text evidence="2 4">Overall loss in complex colony architecture and lack of fruiting body-like structures (PubMed:18978066). Disruption of the gene results in the loss of surface repellency and alters the biofilm surface microstructure (PubMed:22571672).</text>
</comment>
<comment type="similarity">
    <text evidence="8">Belongs to the BslA/BslB family.</text>
</comment>
<dbReference type="EMBL" id="AL009126">
    <property type="protein sequence ID" value="CAB15086.1"/>
    <property type="molecule type" value="Genomic_DNA"/>
</dbReference>
<dbReference type="EMBL" id="U47861">
    <property type="protein sequence ID" value="AAC44367.1"/>
    <property type="molecule type" value="Genomic_DNA"/>
</dbReference>
<dbReference type="PIR" id="D70005">
    <property type="entry name" value="D70005"/>
</dbReference>
<dbReference type="RefSeq" id="NP_390986.1">
    <property type="nucleotide sequence ID" value="NC_000964.3"/>
</dbReference>
<dbReference type="RefSeq" id="WP_003243556.1">
    <property type="nucleotide sequence ID" value="NZ_OZ025638.1"/>
</dbReference>
<dbReference type="PDB" id="4BHU">
    <property type="method" value="X-ray"/>
    <property type="resolution" value="1.91 A"/>
    <property type="chains" value="A/B/C/D/E/F/G/H/I/J=48-172"/>
</dbReference>
<dbReference type="PDBsum" id="4BHU"/>
<dbReference type="SMR" id="P71014"/>
<dbReference type="FunCoup" id="P71014">
    <property type="interactions" value="1"/>
</dbReference>
<dbReference type="IntAct" id="P71014">
    <property type="interactions" value="3"/>
</dbReference>
<dbReference type="STRING" id="224308.BSU31080"/>
<dbReference type="PaxDb" id="224308-BSU31080"/>
<dbReference type="DNASU" id="938831"/>
<dbReference type="EnsemblBacteria" id="CAB15086">
    <property type="protein sequence ID" value="CAB15086"/>
    <property type="gene ID" value="BSU_31080"/>
</dbReference>
<dbReference type="GeneID" id="938831"/>
<dbReference type="KEGG" id="bsu:BSU31080"/>
<dbReference type="PATRIC" id="fig|224308.179.peg.3368"/>
<dbReference type="eggNOG" id="ENOG502ZUCW">
    <property type="taxonomic scope" value="Bacteria"/>
</dbReference>
<dbReference type="InParanoid" id="P71014"/>
<dbReference type="OrthoDB" id="2850669at2"/>
<dbReference type="BioCyc" id="BSUB:BSU31080-MONOMER"/>
<dbReference type="EvolutionaryTrace" id="P71014"/>
<dbReference type="Proteomes" id="UP000001570">
    <property type="component" value="Chromosome"/>
</dbReference>
<dbReference type="GO" id="GO:0005576">
    <property type="term" value="C:extracellular region"/>
    <property type="evidence" value="ECO:0007669"/>
    <property type="project" value="UniProtKB-SubCell"/>
</dbReference>
<dbReference type="CDD" id="cd14670">
    <property type="entry name" value="BslA_like"/>
    <property type="match status" value="1"/>
</dbReference>
<dbReference type="Gene3D" id="2.60.40.3490">
    <property type="match status" value="1"/>
</dbReference>
<dbReference type="InterPro" id="IPR034650">
    <property type="entry name" value="YuaB-like"/>
</dbReference>
<dbReference type="InterPro" id="IPR038480">
    <property type="entry name" value="YuaB-like_sf"/>
</dbReference>
<dbReference type="NCBIfam" id="NF041825">
    <property type="entry name" value="hydrophobin_BslA"/>
    <property type="match status" value="1"/>
</dbReference>
<dbReference type="Pfam" id="PF17735">
    <property type="entry name" value="BslA"/>
    <property type="match status" value="1"/>
</dbReference>
<gene>
    <name evidence="7" type="primary">bslA</name>
    <name type="synonym">yuaB</name>
    <name type="ordered locus">BSU31080</name>
</gene>
<name>BSLA_BACSU</name>
<keyword id="KW-0002">3D-structure</keyword>
<keyword id="KW-0134">Cell wall</keyword>
<keyword id="KW-1185">Reference proteome</keyword>
<keyword id="KW-0964">Secreted</keyword>
<keyword id="KW-0732">Signal</keyword>
<sequence>MKRKLLSSLAISALSLGLLVSAPTASFAAESTSTKAHTESTMRTQSTASLFATITGASKTEWSFSDIELTYRPNTLLSLGVMEFTLPSGFTANTKDTLNGNALRTTQILNNGKTVRVPLALDLLGAGEFKLKLNNKTLPAAGTYTFRAENKSLSIGNKFYAEASIDVAKRSTPPTQPCGCN</sequence>
<proteinExistence type="evidence at protein level"/>
<accession>P71014</accession>